<feature type="chain" id="PRO_1000189038" description="Cytochrome c-type biogenesis protein CcmE">
    <location>
        <begin position="1"/>
        <end position="160"/>
    </location>
</feature>
<feature type="topological domain" description="Cytoplasmic" evidence="1">
    <location>
        <begin position="1"/>
        <end position="7"/>
    </location>
</feature>
<feature type="transmembrane region" description="Helical; Signal-anchor for type II membrane protein" evidence="1">
    <location>
        <begin position="8"/>
        <end position="28"/>
    </location>
</feature>
<feature type="topological domain" description="Periplasmic" evidence="1">
    <location>
        <begin position="29"/>
        <end position="160"/>
    </location>
</feature>
<feature type="region of interest" description="Disordered" evidence="2">
    <location>
        <begin position="141"/>
        <end position="160"/>
    </location>
</feature>
<feature type="binding site" description="covalent" evidence="1">
    <location>
        <position position="122"/>
    </location>
    <ligand>
        <name>heme</name>
        <dbReference type="ChEBI" id="CHEBI:30413"/>
    </ligand>
</feature>
<feature type="binding site" description="axial binding residue" evidence="1">
    <location>
        <position position="126"/>
    </location>
    <ligand>
        <name>heme</name>
        <dbReference type="ChEBI" id="CHEBI:30413"/>
    </ligand>
    <ligandPart>
        <name>Fe</name>
        <dbReference type="ChEBI" id="CHEBI:18248"/>
    </ligandPart>
</feature>
<protein>
    <recommendedName>
        <fullName evidence="1">Cytochrome c-type biogenesis protein CcmE</fullName>
    </recommendedName>
    <alternativeName>
        <fullName evidence="1">Cytochrome c maturation protein E</fullName>
    </alternativeName>
    <alternativeName>
        <fullName evidence="1">Heme chaperone CcmE</fullName>
    </alternativeName>
</protein>
<gene>
    <name evidence="1" type="primary">ccmE</name>
    <name evidence="1" type="synonym">cycJ</name>
    <name type="ordered locus">Plav_0940</name>
</gene>
<name>CCME_PARL1</name>
<accession>A7HRN0</accession>
<comment type="function">
    <text evidence="1">Heme chaperone required for the biogenesis of c-type cytochromes. Transiently binds heme delivered by CcmC and transfers the heme to apo-cytochromes in a process facilitated by CcmF and CcmH.</text>
</comment>
<comment type="subcellular location">
    <subcellularLocation>
        <location evidence="1">Cell inner membrane</location>
        <topology evidence="1">Single-pass type II membrane protein</topology>
        <orientation evidence="1">Periplasmic side</orientation>
    </subcellularLocation>
</comment>
<comment type="similarity">
    <text evidence="1">Belongs to the CcmE/CycJ family.</text>
</comment>
<evidence type="ECO:0000255" key="1">
    <source>
        <dbReference type="HAMAP-Rule" id="MF_01959"/>
    </source>
</evidence>
<evidence type="ECO:0000256" key="2">
    <source>
        <dbReference type="SAM" id="MobiDB-lite"/>
    </source>
</evidence>
<dbReference type="EMBL" id="CP000774">
    <property type="protein sequence ID" value="ABS62563.1"/>
    <property type="molecule type" value="Genomic_DNA"/>
</dbReference>
<dbReference type="RefSeq" id="WP_012109817.1">
    <property type="nucleotide sequence ID" value="NC_009719.1"/>
</dbReference>
<dbReference type="SMR" id="A7HRN0"/>
<dbReference type="STRING" id="402881.Plav_0940"/>
<dbReference type="KEGG" id="pla:Plav_0940"/>
<dbReference type="eggNOG" id="COG2332">
    <property type="taxonomic scope" value="Bacteria"/>
</dbReference>
<dbReference type="HOGENOM" id="CLU_079503_1_1_5"/>
<dbReference type="OrthoDB" id="9793584at2"/>
<dbReference type="Proteomes" id="UP000006377">
    <property type="component" value="Chromosome"/>
</dbReference>
<dbReference type="GO" id="GO:0005886">
    <property type="term" value="C:plasma membrane"/>
    <property type="evidence" value="ECO:0007669"/>
    <property type="project" value="UniProtKB-SubCell"/>
</dbReference>
<dbReference type="GO" id="GO:0020037">
    <property type="term" value="F:heme binding"/>
    <property type="evidence" value="ECO:0007669"/>
    <property type="project" value="InterPro"/>
</dbReference>
<dbReference type="GO" id="GO:0046872">
    <property type="term" value="F:metal ion binding"/>
    <property type="evidence" value="ECO:0007669"/>
    <property type="project" value="UniProtKB-KW"/>
</dbReference>
<dbReference type="GO" id="GO:0017004">
    <property type="term" value="P:cytochrome complex assembly"/>
    <property type="evidence" value="ECO:0007669"/>
    <property type="project" value="UniProtKB-KW"/>
</dbReference>
<dbReference type="Gene3D" id="2.40.50.140">
    <property type="entry name" value="Nucleic acid-binding proteins"/>
    <property type="match status" value="1"/>
</dbReference>
<dbReference type="HAMAP" id="MF_01959">
    <property type="entry name" value="CcmE"/>
    <property type="match status" value="1"/>
</dbReference>
<dbReference type="InterPro" id="IPR004329">
    <property type="entry name" value="CcmE"/>
</dbReference>
<dbReference type="InterPro" id="IPR036127">
    <property type="entry name" value="CcmE-like_sf"/>
</dbReference>
<dbReference type="InterPro" id="IPR012340">
    <property type="entry name" value="NA-bd_OB-fold"/>
</dbReference>
<dbReference type="NCBIfam" id="NF009727">
    <property type="entry name" value="PRK13254.1-1"/>
    <property type="match status" value="1"/>
</dbReference>
<dbReference type="NCBIfam" id="NF009729">
    <property type="entry name" value="PRK13254.1-3"/>
    <property type="match status" value="1"/>
</dbReference>
<dbReference type="NCBIfam" id="NF009731">
    <property type="entry name" value="PRK13254.1-5"/>
    <property type="match status" value="1"/>
</dbReference>
<dbReference type="PANTHER" id="PTHR34128">
    <property type="entry name" value="CYTOCHROME C-TYPE BIOGENESIS PROTEIN CCME HOMOLOG, MITOCHONDRIAL"/>
    <property type="match status" value="1"/>
</dbReference>
<dbReference type="PANTHER" id="PTHR34128:SF2">
    <property type="entry name" value="CYTOCHROME C-TYPE BIOGENESIS PROTEIN CCME HOMOLOG, MITOCHONDRIAL"/>
    <property type="match status" value="1"/>
</dbReference>
<dbReference type="Pfam" id="PF03100">
    <property type="entry name" value="CcmE"/>
    <property type="match status" value="1"/>
</dbReference>
<dbReference type="SUPFAM" id="SSF82093">
    <property type="entry name" value="Heme chaperone CcmE"/>
    <property type="match status" value="1"/>
</dbReference>
<reference key="1">
    <citation type="journal article" date="2011" name="Stand. Genomic Sci.">
        <title>Complete genome sequence of Parvibaculum lavamentivorans type strain (DS-1(T)).</title>
        <authorList>
            <person name="Schleheck D."/>
            <person name="Weiss M."/>
            <person name="Pitluck S."/>
            <person name="Bruce D."/>
            <person name="Land M.L."/>
            <person name="Han S."/>
            <person name="Saunders E."/>
            <person name="Tapia R."/>
            <person name="Detter C."/>
            <person name="Brettin T."/>
            <person name="Han J."/>
            <person name="Woyke T."/>
            <person name="Goodwin L."/>
            <person name="Pennacchio L."/>
            <person name="Nolan M."/>
            <person name="Cook A.M."/>
            <person name="Kjelleberg S."/>
            <person name="Thomas T."/>
        </authorList>
    </citation>
    <scope>NUCLEOTIDE SEQUENCE [LARGE SCALE GENOMIC DNA]</scope>
    <source>
        <strain>DS-1 / DSM 13023 / NCIMB 13966</strain>
    </source>
</reference>
<organism>
    <name type="scientific">Parvibaculum lavamentivorans (strain DS-1 / DSM 13023 / NCIMB 13966)</name>
    <dbReference type="NCBI Taxonomy" id="402881"/>
    <lineage>
        <taxon>Bacteria</taxon>
        <taxon>Pseudomonadati</taxon>
        <taxon>Pseudomonadota</taxon>
        <taxon>Alphaproteobacteria</taxon>
        <taxon>Hyphomicrobiales</taxon>
        <taxon>Parvibaculaceae</taxon>
        <taxon>Parvibaculum</taxon>
    </lineage>
</organism>
<keyword id="KW-0997">Cell inner membrane</keyword>
<keyword id="KW-1003">Cell membrane</keyword>
<keyword id="KW-0201">Cytochrome c-type biogenesis</keyword>
<keyword id="KW-0349">Heme</keyword>
<keyword id="KW-0408">Iron</keyword>
<keyword id="KW-0472">Membrane</keyword>
<keyword id="KW-0479">Metal-binding</keyword>
<keyword id="KW-1185">Reference proteome</keyword>
<keyword id="KW-0735">Signal-anchor</keyword>
<keyword id="KW-0812">Transmembrane</keyword>
<keyword id="KW-1133">Transmembrane helix</keyword>
<proteinExistence type="inferred from homology"/>
<sequence length="160" mass="17462">MTRKQRRATFIAVSLGILALAVGLVLYAMRDSIVYFYSPSDVVERGVEPGQRIRLGGLVEEGSLEQLGDAYIRFNVTDFAETIPVTYRGVLPDLFREGQGVVTEGALDGTGAFIADNVLAKHDEYYMPPEVADALKRTGNWQGEGAEAPHSETYGQGSYP</sequence>